<keyword id="KW-0963">Cytoplasm</keyword>
<keyword id="KW-0269">Exonuclease</keyword>
<keyword id="KW-0378">Hydrolase</keyword>
<keyword id="KW-0540">Nuclease</keyword>
<keyword id="KW-1185">Reference proteome</keyword>
<keyword id="KW-0694">RNA-binding</keyword>
<comment type="function">
    <text evidence="2">3'-5' exoribonuclease that releases 5'-nucleoside monophosphates and is involved in maturation of structured RNAs.</text>
</comment>
<comment type="catalytic activity">
    <reaction evidence="2">
        <text>Exonucleolytic cleavage in the 3'- to 5'-direction to yield nucleoside 5'-phosphates.</text>
        <dbReference type="EC" id="3.1.13.1"/>
    </reaction>
</comment>
<comment type="subunit">
    <text evidence="2">Monomer.</text>
</comment>
<comment type="subcellular location">
    <subcellularLocation>
        <location evidence="2">Cytoplasm</location>
    </subcellularLocation>
</comment>
<comment type="similarity">
    <text evidence="2">Belongs to the RNR ribonuclease family. RNase R subfamily.</text>
</comment>
<comment type="sequence caution" evidence="3">
    <conflict type="erroneous initiation">
        <sequence resource="EMBL-CDS" id="BAB13255"/>
    </conflict>
    <text>Extended N-terminus.</text>
</comment>
<dbReference type="EC" id="3.1.13.1" evidence="2"/>
<dbReference type="EMBL" id="BA000003">
    <property type="protein sequence ID" value="BAB13255.1"/>
    <property type="status" value="ALT_INIT"/>
    <property type="molecule type" value="Genomic_DNA"/>
</dbReference>
<dbReference type="RefSeq" id="NP_240369.1">
    <property type="nucleotide sequence ID" value="NC_002528.1"/>
</dbReference>
<dbReference type="RefSeq" id="WP_014498791.1">
    <property type="nucleotide sequence ID" value="NC_002528.1"/>
</dbReference>
<dbReference type="SMR" id="P57628"/>
<dbReference type="STRING" id="563178.BUAP5A_558"/>
<dbReference type="EnsemblBacteria" id="BAB13255">
    <property type="protein sequence ID" value="BAB13255"/>
    <property type="gene ID" value="BAB13255"/>
</dbReference>
<dbReference type="KEGG" id="buc:BU565"/>
<dbReference type="PATRIC" id="fig|107806.10.peg.568"/>
<dbReference type="eggNOG" id="COG0557">
    <property type="taxonomic scope" value="Bacteria"/>
</dbReference>
<dbReference type="HOGENOM" id="CLU_002333_7_0_6"/>
<dbReference type="Proteomes" id="UP000001806">
    <property type="component" value="Chromosome"/>
</dbReference>
<dbReference type="GO" id="GO:0005829">
    <property type="term" value="C:cytosol"/>
    <property type="evidence" value="ECO:0007669"/>
    <property type="project" value="UniProtKB-ARBA"/>
</dbReference>
<dbReference type="GO" id="GO:0008859">
    <property type="term" value="F:exoribonuclease II activity"/>
    <property type="evidence" value="ECO:0007669"/>
    <property type="project" value="UniProtKB-UniRule"/>
</dbReference>
<dbReference type="GO" id="GO:0003723">
    <property type="term" value="F:RNA binding"/>
    <property type="evidence" value="ECO:0007669"/>
    <property type="project" value="UniProtKB-UniRule"/>
</dbReference>
<dbReference type="GO" id="GO:0006402">
    <property type="term" value="P:mRNA catabolic process"/>
    <property type="evidence" value="ECO:0007669"/>
    <property type="project" value="TreeGrafter"/>
</dbReference>
<dbReference type="CDD" id="cd04471">
    <property type="entry name" value="S1_RNase_R"/>
    <property type="match status" value="1"/>
</dbReference>
<dbReference type="Gene3D" id="2.40.50.140">
    <property type="entry name" value="Nucleic acid-binding proteins"/>
    <property type="match status" value="2"/>
</dbReference>
<dbReference type="HAMAP" id="MF_01895">
    <property type="entry name" value="RNase_R"/>
    <property type="match status" value="1"/>
</dbReference>
<dbReference type="InterPro" id="IPR011129">
    <property type="entry name" value="CSD"/>
</dbReference>
<dbReference type="InterPro" id="IPR040476">
    <property type="entry name" value="CSD2"/>
</dbReference>
<dbReference type="InterPro" id="IPR012340">
    <property type="entry name" value="NA-bd_OB-fold"/>
</dbReference>
<dbReference type="InterPro" id="IPR013223">
    <property type="entry name" value="RNase_B_OB_dom"/>
</dbReference>
<dbReference type="InterPro" id="IPR001900">
    <property type="entry name" value="RNase_II/R"/>
</dbReference>
<dbReference type="InterPro" id="IPR022966">
    <property type="entry name" value="RNase_II/R_CS"/>
</dbReference>
<dbReference type="InterPro" id="IPR004476">
    <property type="entry name" value="RNase_II/RNase_R"/>
</dbReference>
<dbReference type="InterPro" id="IPR011805">
    <property type="entry name" value="RNase_R"/>
</dbReference>
<dbReference type="InterPro" id="IPR050180">
    <property type="entry name" value="RNR_Ribonuclease"/>
</dbReference>
<dbReference type="InterPro" id="IPR003029">
    <property type="entry name" value="S1_domain"/>
</dbReference>
<dbReference type="NCBIfam" id="TIGR00358">
    <property type="entry name" value="3_prime_RNase"/>
    <property type="match status" value="1"/>
</dbReference>
<dbReference type="NCBIfam" id="NF008648">
    <property type="entry name" value="PRK11642.1"/>
    <property type="match status" value="1"/>
</dbReference>
<dbReference type="NCBIfam" id="TIGR02063">
    <property type="entry name" value="RNase_R"/>
    <property type="match status" value="1"/>
</dbReference>
<dbReference type="PANTHER" id="PTHR23355:SF9">
    <property type="entry name" value="DIS3-LIKE EXONUCLEASE 2"/>
    <property type="match status" value="1"/>
</dbReference>
<dbReference type="PANTHER" id="PTHR23355">
    <property type="entry name" value="RIBONUCLEASE"/>
    <property type="match status" value="1"/>
</dbReference>
<dbReference type="Pfam" id="PF17876">
    <property type="entry name" value="CSD2"/>
    <property type="match status" value="1"/>
</dbReference>
<dbReference type="Pfam" id="PF08206">
    <property type="entry name" value="OB_RNB"/>
    <property type="match status" value="1"/>
</dbReference>
<dbReference type="Pfam" id="PF00773">
    <property type="entry name" value="RNB"/>
    <property type="match status" value="1"/>
</dbReference>
<dbReference type="Pfam" id="PF00575">
    <property type="entry name" value="S1"/>
    <property type="match status" value="1"/>
</dbReference>
<dbReference type="SMART" id="SM00357">
    <property type="entry name" value="CSP"/>
    <property type="match status" value="1"/>
</dbReference>
<dbReference type="SMART" id="SM00955">
    <property type="entry name" value="RNB"/>
    <property type="match status" value="1"/>
</dbReference>
<dbReference type="SMART" id="SM00316">
    <property type="entry name" value="S1"/>
    <property type="match status" value="1"/>
</dbReference>
<dbReference type="SUPFAM" id="SSF50249">
    <property type="entry name" value="Nucleic acid-binding proteins"/>
    <property type="match status" value="4"/>
</dbReference>
<dbReference type="PROSITE" id="PS01175">
    <property type="entry name" value="RIBONUCLEASE_II"/>
    <property type="match status" value="1"/>
</dbReference>
<dbReference type="PROSITE" id="PS50126">
    <property type="entry name" value="S1"/>
    <property type="match status" value="1"/>
</dbReference>
<sequence>MVVDPYQKREAKRYKNPIPSREYISSCLRTSQDLISQKNLEKKFGINNQESKKALRRRLRAMERDGQVIYTSNRCYVAPESLKIVKGKVIGHRDGYGFLRTETLKEDLWLSSEQMKSCIHGDIILAHIVETHGKRRSSARFLKLLQPNNILIVGRYYIDDKIKFVIPDDTRFNFKIFIFSAIKDDISIGSIVSVKLKQHPIRNSRVQGFIVEILGKEMGTNLAIEIALRTHLIPSLWSKEVKKQVYEISRKINQYDFKNRTDLRHFPFFTIDDEDARDFDDAVFCKRKANPEEGWILWVAIADVSCYVQPNTPLDKAALERGTSVYFPSLVIPMLPEKISTDLCSLKPNVERLCLICEMSLSKQGELISYKHYEGIICSHGRFTYNEIFKIWNGDIFLRSKYKKFLKDIENLSCLQNIFNKDNISKKGIYFENIEPKFVLDSNLRIKSIYQNIRNDAHKFIESCMILANVASARFVEKYKYPVLFRNHDRPKKDNVVSLRLFLNELGFTLLGGDSPESVHYSNLLKNVSDRPEYEMIQTVLLRSMTQAVYSPDNRGHFGLSLSSYVHFTSPIRRYPDLILHRVIKYLLFKDKNTSKSNYNFYSAHLYSTGEIKKIGAHCSITERRADEANRDVIDWLKCDFMYKKIGCILNGVISNVTTFGFFVRLNQFFIDGLVHINSLNDDYYYFDSLGLKLIGKSTKNTYCLGDALKVKVISVNLNEKKIELSLYKSS</sequence>
<evidence type="ECO:0000255" key="1"/>
<evidence type="ECO:0000255" key="2">
    <source>
        <dbReference type="HAMAP-Rule" id="MF_01895"/>
    </source>
</evidence>
<evidence type="ECO:0000305" key="3"/>
<protein>
    <recommendedName>
        <fullName evidence="2">Ribonuclease R</fullName>
        <shortName evidence="2">RNase R</shortName>
        <ecNumber evidence="2">3.1.13.1</ecNumber>
    </recommendedName>
    <alternativeName>
        <fullName>VacB protein homolog</fullName>
    </alternativeName>
</protein>
<organism>
    <name type="scientific">Buchnera aphidicola subsp. Acyrthosiphon pisum (strain APS)</name>
    <name type="common">Acyrthosiphon pisum symbiotic bacterium</name>
    <dbReference type="NCBI Taxonomy" id="107806"/>
    <lineage>
        <taxon>Bacteria</taxon>
        <taxon>Pseudomonadati</taxon>
        <taxon>Pseudomonadota</taxon>
        <taxon>Gammaproteobacteria</taxon>
        <taxon>Enterobacterales</taxon>
        <taxon>Erwiniaceae</taxon>
        <taxon>Buchnera</taxon>
    </lineage>
</organism>
<proteinExistence type="inferred from homology"/>
<name>RNR_BUCAI</name>
<accession>P57628</accession>
<feature type="chain" id="PRO_0000166397" description="Ribonuclease R">
    <location>
        <begin position="1"/>
        <end position="731"/>
    </location>
</feature>
<feature type="domain" description="RNB" evidence="1">
    <location>
        <begin position="260"/>
        <end position="589"/>
    </location>
</feature>
<feature type="domain" description="S1 motif" evidence="2">
    <location>
        <begin position="647"/>
        <end position="728"/>
    </location>
</feature>
<reference key="1">
    <citation type="journal article" date="2000" name="Nature">
        <title>Genome sequence of the endocellular bacterial symbiont of aphids Buchnera sp. APS.</title>
        <authorList>
            <person name="Shigenobu S."/>
            <person name="Watanabe H."/>
            <person name="Hattori M."/>
            <person name="Sakaki Y."/>
            <person name="Ishikawa H."/>
        </authorList>
    </citation>
    <scope>NUCLEOTIDE SEQUENCE [LARGE SCALE GENOMIC DNA]</scope>
    <source>
        <strain>APS</strain>
    </source>
</reference>
<gene>
    <name evidence="2" type="primary">rnr</name>
    <name type="ordered locus">BU565</name>
</gene>